<sequence>MMNWRALSQTKQDRIWSEVNKIIKWKPGSRCHHIIPPDPYRVFDISSAMSSKAGHNDVSGVLSDLETSILKAFQLGTGKNDVMYALDWQHDGYTFSPHQAMPKDEFGEWPVPVFPNGDYYFFFHQDFSWGLLGDPWKCAITVFGEELLEAIDNDPPILFRNK</sequence>
<evidence type="ECO:0000305" key="1"/>
<organism>
    <name type="scientific">Bacillus subtilis (strain 168)</name>
    <dbReference type="NCBI Taxonomy" id="224308"/>
    <lineage>
        <taxon>Bacteria</taxon>
        <taxon>Bacillati</taxon>
        <taxon>Bacillota</taxon>
        <taxon>Bacilli</taxon>
        <taxon>Bacillales</taxon>
        <taxon>Bacillaceae</taxon>
        <taxon>Bacillus</taxon>
    </lineage>
</organism>
<comment type="sequence caution" evidence="1">
    <conflict type="erroneous initiation">
        <sequence resource="EMBL-CDS" id="BAA06265"/>
    </conflict>
</comment>
<feature type="chain" id="PRO_0000050027" description="Uncharacterized protein YxiI">
    <location>
        <begin position="1"/>
        <end position="162"/>
    </location>
</feature>
<keyword id="KW-1185">Reference proteome</keyword>
<protein>
    <recommendedName>
        <fullName>Uncharacterized protein YxiI</fullName>
    </recommendedName>
</protein>
<dbReference type="EMBL" id="D31856">
    <property type="protein sequence ID" value="BAA06661.1"/>
    <property type="molecule type" value="Genomic_DNA"/>
</dbReference>
<dbReference type="EMBL" id="D83026">
    <property type="protein sequence ID" value="BAA11688.1"/>
    <property type="molecule type" value="Genomic_DNA"/>
</dbReference>
<dbReference type="EMBL" id="D29985">
    <property type="protein sequence ID" value="BAA06265.1"/>
    <property type="status" value="ALT_INIT"/>
    <property type="molecule type" value="Genomic_DNA"/>
</dbReference>
<dbReference type="EMBL" id="AL009126">
    <property type="protein sequence ID" value="CAB15952.1"/>
    <property type="molecule type" value="Genomic_DNA"/>
</dbReference>
<dbReference type="PIR" id="E70077">
    <property type="entry name" value="E70077"/>
</dbReference>
<dbReference type="RefSeq" id="NP_391795.1">
    <property type="nucleotide sequence ID" value="NC_000964.3"/>
</dbReference>
<dbReference type="RefSeq" id="WP_010886642.1">
    <property type="nucleotide sequence ID" value="NZ_OZ025638.1"/>
</dbReference>
<dbReference type="FunCoup" id="P42301">
    <property type="interactions" value="61"/>
</dbReference>
<dbReference type="STRING" id="224308.BSU39160"/>
<dbReference type="PaxDb" id="224308-BSU39160"/>
<dbReference type="EnsemblBacteria" id="CAB15952">
    <property type="protein sequence ID" value="CAB15952"/>
    <property type="gene ID" value="BSU_39160"/>
</dbReference>
<dbReference type="GeneID" id="937495"/>
<dbReference type="KEGG" id="bsu:BSU39160"/>
<dbReference type="PATRIC" id="fig|224308.43.peg.4109"/>
<dbReference type="eggNOG" id="ENOG5032U73">
    <property type="taxonomic scope" value="Bacteria"/>
</dbReference>
<dbReference type="InParanoid" id="P42301"/>
<dbReference type="OrthoDB" id="80999at2"/>
<dbReference type="BioCyc" id="BSUB:BSU39160-MONOMER"/>
<dbReference type="Proteomes" id="UP000001570">
    <property type="component" value="Chromosome"/>
</dbReference>
<dbReference type="InterPro" id="IPR020323">
    <property type="entry name" value="DUF2716"/>
</dbReference>
<dbReference type="Pfam" id="PF10898">
    <property type="entry name" value="DUF2716"/>
    <property type="match status" value="1"/>
</dbReference>
<name>YXII_BACSU</name>
<accession>P42301</accession>
<reference key="1">
    <citation type="journal article" date="1995" name="Microbiology">
        <title>Cloning and sequencing of a 29 kb region of the Bacillus subtilis genome containing the hut and wapA loci.</title>
        <authorList>
            <person name="Yoshida K."/>
            <person name="Sano H."/>
            <person name="Seki S."/>
            <person name="Oda M."/>
            <person name="Fujimura M."/>
            <person name="Fujita Y."/>
        </authorList>
    </citation>
    <scope>NUCLEOTIDE SEQUENCE [GENOMIC DNA]</scope>
    <source>
        <strain>168 / BGSC1A1</strain>
    </source>
</reference>
<reference key="2">
    <citation type="journal article" date="1996" name="Microbiology">
        <title>Sequencing of a 65 kb region of the Bacillus subtilis genome containing the lic and cel loci, and creation of a 177 kb contig covering the gnt-sacXY region.</title>
        <authorList>
            <person name="Yoshida K."/>
            <person name="Shindo K."/>
            <person name="Sano H."/>
            <person name="Seki S."/>
            <person name="Fujimura M."/>
            <person name="Yanai N."/>
            <person name="Miwa Y."/>
            <person name="Fujita Y."/>
        </authorList>
    </citation>
    <scope>NUCLEOTIDE SEQUENCE [GENOMIC DNA]</scope>
    <source>
        <strain>168 / BGSC1A1</strain>
    </source>
</reference>
<reference key="3">
    <citation type="journal article" date="1997" name="Nature">
        <title>The complete genome sequence of the Gram-positive bacterium Bacillus subtilis.</title>
        <authorList>
            <person name="Kunst F."/>
            <person name="Ogasawara N."/>
            <person name="Moszer I."/>
            <person name="Albertini A.M."/>
            <person name="Alloni G."/>
            <person name="Azevedo V."/>
            <person name="Bertero M.G."/>
            <person name="Bessieres P."/>
            <person name="Bolotin A."/>
            <person name="Borchert S."/>
            <person name="Borriss R."/>
            <person name="Boursier L."/>
            <person name="Brans A."/>
            <person name="Braun M."/>
            <person name="Brignell S.C."/>
            <person name="Bron S."/>
            <person name="Brouillet S."/>
            <person name="Bruschi C.V."/>
            <person name="Caldwell B."/>
            <person name="Capuano V."/>
            <person name="Carter N.M."/>
            <person name="Choi S.-K."/>
            <person name="Codani J.-J."/>
            <person name="Connerton I.F."/>
            <person name="Cummings N.J."/>
            <person name="Daniel R.A."/>
            <person name="Denizot F."/>
            <person name="Devine K.M."/>
            <person name="Duesterhoeft A."/>
            <person name="Ehrlich S.D."/>
            <person name="Emmerson P.T."/>
            <person name="Entian K.-D."/>
            <person name="Errington J."/>
            <person name="Fabret C."/>
            <person name="Ferrari E."/>
            <person name="Foulger D."/>
            <person name="Fritz C."/>
            <person name="Fujita M."/>
            <person name="Fujita Y."/>
            <person name="Fuma S."/>
            <person name="Galizzi A."/>
            <person name="Galleron N."/>
            <person name="Ghim S.-Y."/>
            <person name="Glaser P."/>
            <person name="Goffeau A."/>
            <person name="Golightly E.J."/>
            <person name="Grandi G."/>
            <person name="Guiseppi G."/>
            <person name="Guy B.J."/>
            <person name="Haga K."/>
            <person name="Haiech J."/>
            <person name="Harwood C.R."/>
            <person name="Henaut A."/>
            <person name="Hilbert H."/>
            <person name="Holsappel S."/>
            <person name="Hosono S."/>
            <person name="Hullo M.-F."/>
            <person name="Itaya M."/>
            <person name="Jones L.-M."/>
            <person name="Joris B."/>
            <person name="Karamata D."/>
            <person name="Kasahara Y."/>
            <person name="Klaerr-Blanchard M."/>
            <person name="Klein C."/>
            <person name="Kobayashi Y."/>
            <person name="Koetter P."/>
            <person name="Koningstein G."/>
            <person name="Krogh S."/>
            <person name="Kumano M."/>
            <person name="Kurita K."/>
            <person name="Lapidus A."/>
            <person name="Lardinois S."/>
            <person name="Lauber J."/>
            <person name="Lazarevic V."/>
            <person name="Lee S.-M."/>
            <person name="Levine A."/>
            <person name="Liu H."/>
            <person name="Masuda S."/>
            <person name="Mauel C."/>
            <person name="Medigue C."/>
            <person name="Medina N."/>
            <person name="Mellado R.P."/>
            <person name="Mizuno M."/>
            <person name="Moestl D."/>
            <person name="Nakai S."/>
            <person name="Noback M."/>
            <person name="Noone D."/>
            <person name="O'Reilly M."/>
            <person name="Ogawa K."/>
            <person name="Ogiwara A."/>
            <person name="Oudega B."/>
            <person name="Park S.-H."/>
            <person name="Parro V."/>
            <person name="Pohl T.M."/>
            <person name="Portetelle D."/>
            <person name="Porwollik S."/>
            <person name="Prescott A.M."/>
            <person name="Presecan E."/>
            <person name="Pujic P."/>
            <person name="Purnelle B."/>
            <person name="Rapoport G."/>
            <person name="Rey M."/>
            <person name="Reynolds S."/>
            <person name="Rieger M."/>
            <person name="Rivolta C."/>
            <person name="Rocha E."/>
            <person name="Roche B."/>
            <person name="Rose M."/>
            <person name="Sadaie Y."/>
            <person name="Sato T."/>
            <person name="Scanlan E."/>
            <person name="Schleich S."/>
            <person name="Schroeter R."/>
            <person name="Scoffone F."/>
            <person name="Sekiguchi J."/>
            <person name="Sekowska A."/>
            <person name="Seror S.J."/>
            <person name="Serror P."/>
            <person name="Shin B.-S."/>
            <person name="Soldo B."/>
            <person name="Sorokin A."/>
            <person name="Tacconi E."/>
            <person name="Takagi T."/>
            <person name="Takahashi H."/>
            <person name="Takemaru K."/>
            <person name="Takeuchi M."/>
            <person name="Tamakoshi A."/>
            <person name="Tanaka T."/>
            <person name="Terpstra P."/>
            <person name="Tognoni A."/>
            <person name="Tosato V."/>
            <person name="Uchiyama S."/>
            <person name="Vandenbol M."/>
            <person name="Vannier F."/>
            <person name="Vassarotti A."/>
            <person name="Viari A."/>
            <person name="Wambutt R."/>
            <person name="Wedler E."/>
            <person name="Wedler H."/>
            <person name="Weitzenegger T."/>
            <person name="Winters P."/>
            <person name="Wipat A."/>
            <person name="Yamamoto H."/>
            <person name="Yamane K."/>
            <person name="Yasumoto K."/>
            <person name="Yata K."/>
            <person name="Yoshida K."/>
            <person name="Yoshikawa H.-F."/>
            <person name="Zumstein E."/>
            <person name="Yoshikawa H."/>
            <person name="Danchin A."/>
        </authorList>
    </citation>
    <scope>NUCLEOTIDE SEQUENCE [LARGE SCALE GENOMIC DNA]</scope>
    <source>
        <strain>168</strain>
    </source>
</reference>
<gene>
    <name type="primary">yxiI</name>
    <name type="ordered locus">BSU39160</name>
    <name type="ORF">N17L</name>
</gene>
<proteinExistence type="predicted"/>